<comment type="function">
    <text evidence="2 3 4 5 6 7 8 9 10 11 12 13 14 16 17">Replaces the SCC1 mitosis-specific cohesin to ensure sister chromatid cohesion during meiosis (PubMed:10412984, PubMed:10691741, PubMed:11081626, PubMed:11163190, PubMed:12101124, PubMed:12663816, PubMed:12665553, PubMed:12717442, PubMed:15062096, PubMed:15120066, PubMed:15819623, PubMed:16027219, PubMed:9784122). Is cleaved by ESP1 shortly before the first meiotic division, and dissociates from chromatin, allowing sister chromatids to segregate (PubMed:11081626). Is protected from cleavage by SPO13 (PubMed:15620644). Promotes localization of the LINC complex subunit MPS3 on nuclear envelope in mitotic cells (PubMed:30417519).</text>
</comment>
<comment type="subcellular location">
    <subcellularLocation>
        <location evidence="2 6 15 16">Nucleus</location>
    </subcellularLocation>
    <subcellularLocation>
        <location evidence="2 6 13 15">Chromosome</location>
    </subcellularLocation>
    <subcellularLocation>
        <location evidence="2 15">Chromosome</location>
        <location evidence="2 15">Centromere</location>
    </subcellularLocation>
    <text evidence="2 15">Localizes at chromosome cores during pachytene. Disappears from chromosome arms shortly before the first meiotic division, but persists in the vincinity of centromeres until the onset of anaphase II.</text>
</comment>
<comment type="induction">
    <text evidence="2 17">During meiosis.</text>
</comment>
<comment type="PTM">
    <text evidence="4">Proteolytically cleaved by ESP1.</text>
</comment>
<comment type="PTM">
    <text evidence="4 7 9">Phosphorylated by CDC5. CDC5 phosphorylation is necessary for cleavage by ESP1 and subsequent removal from chromosome arms.</text>
</comment>
<comment type="similarity">
    <text evidence="20">Belongs to the rad21 family.</text>
</comment>
<proteinExistence type="evidence at protein level"/>
<evidence type="ECO:0000256" key="1">
    <source>
        <dbReference type="SAM" id="MobiDB-lite"/>
    </source>
</evidence>
<evidence type="ECO:0000269" key="2">
    <source>
    </source>
</evidence>
<evidence type="ECO:0000269" key="3">
    <source>
    </source>
</evidence>
<evidence type="ECO:0000269" key="4">
    <source>
    </source>
</evidence>
<evidence type="ECO:0000269" key="5">
    <source>
    </source>
</evidence>
<evidence type="ECO:0000269" key="6">
    <source>
    </source>
</evidence>
<evidence type="ECO:0000269" key="7">
    <source>
    </source>
</evidence>
<evidence type="ECO:0000269" key="8">
    <source>
    </source>
</evidence>
<evidence type="ECO:0000269" key="9">
    <source>
    </source>
</evidence>
<evidence type="ECO:0000269" key="10">
    <source>
    </source>
</evidence>
<evidence type="ECO:0000269" key="11">
    <source>
    </source>
</evidence>
<evidence type="ECO:0000269" key="12">
    <source>
    </source>
</evidence>
<evidence type="ECO:0000269" key="13">
    <source>
    </source>
</evidence>
<evidence type="ECO:0000269" key="14">
    <source>
    </source>
</evidence>
<evidence type="ECO:0000269" key="15">
    <source>
    </source>
</evidence>
<evidence type="ECO:0000269" key="16">
    <source>
    </source>
</evidence>
<evidence type="ECO:0000269" key="17">
    <source>
    </source>
</evidence>
<evidence type="ECO:0000303" key="18">
    <source>
    </source>
</evidence>
<evidence type="ECO:0000303" key="19">
    <source>
    </source>
</evidence>
<evidence type="ECO:0000305" key="20"/>
<protein>
    <recommendedName>
        <fullName evidence="18">Meiotic recombination protein REC8</fullName>
    </recommendedName>
    <alternativeName>
        <fullName evidence="18">Cohesin REC8</fullName>
    </alternativeName>
    <alternativeName>
        <fullName evidence="19">Sporulation protein 69</fullName>
    </alternativeName>
</protein>
<name>REC8_YEAST</name>
<sequence>MAPLSLNFKDDKKYKGLTTVWLLSALGNSIVKESNNYYSNKSNSTGNISSSTVKKKDIVNISIPKTCDEIQNFENDFSLRYISNLLYGVTICYNKKTEYVLNDLNHLLVQLQKNDVYAFKAKNKSTRINGLNSNNSIIGNKNNNYTWEECVFFDDDPLYDITKVPALEFLNTTLQDNVSFIEEAKSIRRQDYINELSNSNRFELHGDMTNSDAQSNLGSNVRNSFPLDEIPVDVDFNLDLDDIVSHQGTPLGSHSSSQKDGNDFKFNYQGDELVLNFENDNENNSNGGEDTSVENEGPVANLKDYELGLEAQASEEENDLQQKLNTRMQRGHRADVGGQFSKVQFDAKTSYPNEVLKFNHGNYSHLMEKNRIRKLTGQNFLTSNISSLVRSCGEEEFFSTNWLSIFNDFSNIKTSEWDLYPQGFSSVERGRKRAHSLVSTQSSSSTRSHEYGRKSFRNNKNDNYSSDMENDNLLLNLEQINEDLEDGHYIEENSQGNILDFNLNLPPSSFGRSHTRNSTRSSGFNEDIVGALRRRVGPSEQNFAEEDDSSNSCFSDGSQQNLQQDKTNFQDVILDYQTKKFYDYIKERSIVVGRTTRSNPPFKRKMLLVDIIPSRMGEAQTGANFDDVERGVSRQIAASAFLSLLNLATKGMVKLNEYPVADAVTKDLKLRREDEIIVYA</sequence>
<gene>
    <name evidence="18" type="primary">REC8</name>
    <name evidence="19" type="synonym">SPO69</name>
    <name type="ordered locus">YPR007C</name>
    <name type="ORF">LPZ7C</name>
</gene>
<feature type="chain" id="PRO_0000268699" description="Meiotic recombination protein REC8">
    <location>
        <begin position="1"/>
        <end position="680"/>
    </location>
</feature>
<feature type="region of interest" description="Disordered" evidence="1">
    <location>
        <begin position="278"/>
        <end position="297"/>
    </location>
</feature>
<feature type="region of interest" description="Disordered" evidence="1">
    <location>
        <begin position="431"/>
        <end position="467"/>
    </location>
</feature>
<feature type="region of interest" description="Disordered" evidence="1">
    <location>
        <begin position="540"/>
        <end position="560"/>
    </location>
</feature>
<feature type="compositionally biased region" description="Low complexity" evidence="1">
    <location>
        <begin position="278"/>
        <end position="290"/>
    </location>
</feature>
<feature type="compositionally biased region" description="Low complexity" evidence="1">
    <location>
        <begin position="436"/>
        <end position="446"/>
    </location>
</feature>
<feature type="compositionally biased region" description="Polar residues" evidence="1">
    <location>
        <begin position="550"/>
        <end position="560"/>
    </location>
</feature>
<feature type="site" description="Cleavage; by ESP1">
    <location>
        <begin position="431"/>
        <end position="432"/>
    </location>
</feature>
<feature type="site" description="Cleavage; by ESP1">
    <location>
        <begin position="453"/>
        <end position="454"/>
    </location>
</feature>
<feature type="mutagenesis site" description="Abolishes cleavage by ESP1 at position R-431; when associated with E-431." evidence="4">
    <original>E</original>
    <variation>R</variation>
    <location>
        <position position="428"/>
    </location>
</feature>
<feature type="mutagenesis site" description="Reduces cleavage by ESP1 at position R-431. Abolishes cleavage by ESP1 at position R-431; when associated with R-428." evidence="4">
    <original>R</original>
    <variation>E</variation>
    <location>
        <position position="431"/>
    </location>
</feature>
<feature type="mutagenesis site" description="Abolishes cleavage by ESP1 at position R-453." evidence="4">
    <original>R</original>
    <variation>E</variation>
    <location>
        <position position="453"/>
    </location>
</feature>
<accession>Q12188</accession>
<accession>D6W418</accession>
<keyword id="KW-0137">Centromere</keyword>
<keyword id="KW-0158">Chromosome</keyword>
<keyword id="KW-0159">Chromosome partition</keyword>
<keyword id="KW-0469">Meiosis</keyword>
<keyword id="KW-0539">Nucleus</keyword>
<keyword id="KW-0597">Phosphoprotein</keyword>
<keyword id="KW-1185">Reference proteome</keyword>
<reference key="1">
    <citation type="journal article" date="1985" name="Cell">
        <title>Functional selection and analysis of yeast centromeric DNA.</title>
        <authorList>
            <person name="Hieter P."/>
            <person name="Pridmore D."/>
            <person name="Hegemann J.H."/>
            <person name="Thomas M."/>
            <person name="Davis R.W."/>
            <person name="Philippsen P."/>
        </authorList>
    </citation>
    <scope>NUCLEOTIDE SEQUENCE [GENOMIC DNA]</scope>
</reference>
<reference key="2">
    <citation type="journal article" date="1997" name="Nature">
        <title>The nucleotide sequence of Saccharomyces cerevisiae chromosome XVI.</title>
        <authorList>
            <person name="Bussey H."/>
            <person name="Storms R.K."/>
            <person name="Ahmed A."/>
            <person name="Albermann K."/>
            <person name="Allen E."/>
            <person name="Ansorge W."/>
            <person name="Araujo R."/>
            <person name="Aparicio A."/>
            <person name="Barrell B.G."/>
            <person name="Badcock K."/>
            <person name="Benes V."/>
            <person name="Botstein D."/>
            <person name="Bowman S."/>
            <person name="Brueckner M."/>
            <person name="Carpenter J."/>
            <person name="Cherry J.M."/>
            <person name="Chung E."/>
            <person name="Churcher C.M."/>
            <person name="Coster F."/>
            <person name="Davis K."/>
            <person name="Davis R.W."/>
            <person name="Dietrich F.S."/>
            <person name="Delius H."/>
            <person name="DiPaolo T."/>
            <person name="Dubois E."/>
            <person name="Duesterhoeft A."/>
            <person name="Duncan M."/>
            <person name="Floeth M."/>
            <person name="Fortin N."/>
            <person name="Friesen J.D."/>
            <person name="Fritz C."/>
            <person name="Goffeau A."/>
            <person name="Hall J."/>
            <person name="Hebling U."/>
            <person name="Heumann K."/>
            <person name="Hilbert H."/>
            <person name="Hillier L.W."/>
            <person name="Hunicke-Smith S."/>
            <person name="Hyman R.W."/>
            <person name="Johnston M."/>
            <person name="Kalman S."/>
            <person name="Kleine K."/>
            <person name="Komp C."/>
            <person name="Kurdi O."/>
            <person name="Lashkari D."/>
            <person name="Lew H."/>
            <person name="Lin A."/>
            <person name="Lin D."/>
            <person name="Louis E.J."/>
            <person name="Marathe R."/>
            <person name="Messenguy F."/>
            <person name="Mewes H.-W."/>
            <person name="Mirtipati S."/>
            <person name="Moestl D."/>
            <person name="Mueller-Auer S."/>
            <person name="Namath A."/>
            <person name="Nentwich U."/>
            <person name="Oefner P."/>
            <person name="Pearson D."/>
            <person name="Petel F.X."/>
            <person name="Pohl T.M."/>
            <person name="Purnelle B."/>
            <person name="Rajandream M.A."/>
            <person name="Rechmann S."/>
            <person name="Rieger M."/>
            <person name="Riles L."/>
            <person name="Roberts D."/>
            <person name="Schaefer M."/>
            <person name="Scharfe M."/>
            <person name="Scherens B."/>
            <person name="Schramm S."/>
            <person name="Schroeder M."/>
            <person name="Sdicu A.-M."/>
            <person name="Tettelin H."/>
            <person name="Urrestarazu L.A."/>
            <person name="Ushinsky S."/>
            <person name="Vierendeels F."/>
            <person name="Vissers S."/>
            <person name="Voss H."/>
            <person name="Walsh S.V."/>
            <person name="Wambutt R."/>
            <person name="Wang Y."/>
            <person name="Wedler E."/>
            <person name="Wedler H."/>
            <person name="Winnett E."/>
            <person name="Zhong W.-W."/>
            <person name="Zollner A."/>
            <person name="Vo D.H."/>
            <person name="Hani J."/>
        </authorList>
    </citation>
    <scope>NUCLEOTIDE SEQUENCE [LARGE SCALE GENOMIC DNA]</scope>
    <source>
        <strain>ATCC 204508 / S288c</strain>
    </source>
</reference>
<reference key="3">
    <citation type="journal article" date="2014" name="G3 (Bethesda)">
        <title>The reference genome sequence of Saccharomyces cerevisiae: Then and now.</title>
        <authorList>
            <person name="Engel S.R."/>
            <person name="Dietrich F.S."/>
            <person name="Fisk D.G."/>
            <person name="Binkley G."/>
            <person name="Balakrishnan R."/>
            <person name="Costanzo M.C."/>
            <person name="Dwight S.S."/>
            <person name="Hitz B.C."/>
            <person name="Karra K."/>
            <person name="Nash R.S."/>
            <person name="Weng S."/>
            <person name="Wong E.D."/>
            <person name="Lloyd P."/>
            <person name="Skrzypek M.S."/>
            <person name="Miyasato S.R."/>
            <person name="Simison M."/>
            <person name="Cherry J.M."/>
        </authorList>
    </citation>
    <scope>GENOME REANNOTATION</scope>
    <source>
        <strain>ATCC 204508 / S288c</strain>
    </source>
</reference>
<reference key="4">
    <citation type="journal article" date="1998" name="Science">
        <title>The transcriptional program of sporulation in budding yeast.</title>
        <authorList>
            <person name="Chu S."/>
            <person name="DeRisi J."/>
            <person name="Eisen M."/>
            <person name="Mulholland J."/>
            <person name="Botstein D."/>
            <person name="Brown P.O."/>
            <person name="Herskowitz I."/>
        </authorList>
    </citation>
    <scope>FUNCTION</scope>
    <scope>INDUCTION</scope>
</reference>
<reference key="5">
    <citation type="journal article" date="1999" name="Cell">
        <title>A central role for cohesins in sister chromatid cohesion, formation of axial elements, and recombination during yeast meiosis.</title>
        <authorList>
            <person name="Klein F."/>
            <person name="Mahr P."/>
            <person name="Galova M."/>
            <person name="Buonomo S.B.C."/>
            <person name="Michaelis C."/>
            <person name="Nairz K."/>
            <person name="Nasmyth K."/>
        </authorList>
    </citation>
    <scope>FUNCTION</scope>
    <scope>INDUCTION</scope>
    <scope>SUBCELLULAR LOCATION</scope>
</reference>
<reference key="6">
    <citation type="journal article" date="2000" name="Cell">
        <title>Disjunction of homologous chromosomes in meiosis I depends on proteolytic cleavage of the meiotic cohesin Rec8 by separin.</title>
        <authorList>
            <person name="Buonomo S.B.C."/>
            <person name="Clyne R.K."/>
            <person name="Fuchs J."/>
            <person name="Loidl J."/>
            <person name="Uhlmann F."/>
            <person name="Nasmyth K."/>
        </authorList>
    </citation>
    <scope>FUNCTION</scope>
    <scope>CLEAVAGE BY ESP1</scope>
    <scope>MUTAGENESIS OF GLU-428; ARG-431 AND ARG-453</scope>
</reference>
<reference key="7">
    <citation type="journal article" date="2000" name="Cell">
        <title>Functional genomics identifies monopolin: a kinetochore protein required for segregation of homologs during meiosis I.</title>
        <authorList>
            <person name="Toth A."/>
            <person name="Rabitsch K.P."/>
            <person name="Galova M."/>
            <person name="Schleiffer A."/>
            <person name="Buonomo S.B.C."/>
            <person name="Nasmyth K."/>
        </authorList>
    </citation>
    <scope>FUNCTION</scope>
</reference>
<reference key="8">
    <citation type="journal article" date="2000" name="Genes Dev.">
        <title>Progression of meiotic DNA replication is modulated by interchromosomal interaction proteins, negatively by Spo11p and positively by Rec8p.</title>
        <authorList>
            <person name="Cha R.S."/>
            <person name="Weiner B.M."/>
            <person name="Keeney S."/>
            <person name="Dekker J."/>
            <person name="Kleckner N."/>
        </authorList>
    </citation>
    <scope>FUNCTION</scope>
</reference>
<reference key="9">
    <citation type="journal article" date="2002" name="Genes Dev.">
        <title>Spo13 protects meiotic cohesin at centromeres in meiosis I.</title>
        <authorList>
            <person name="Shonn M.A."/>
            <person name="McCarroll R."/>
            <person name="Murray A.W."/>
        </authorList>
    </citation>
    <scope>FUNCTION</scope>
    <scope>SUBCELLULAR LOCATION</scope>
</reference>
<reference key="10">
    <citation type="journal article" date="2003" name="J. Cell Sci.">
        <title>Linear element formation and their role in meiotic sister chromatid cohesion and chromosome pairing.</title>
        <authorList>
            <person name="Molnar M."/>
            <person name="Doll E."/>
            <person name="Yamamoto A."/>
            <person name="Hiraoka Y."/>
            <person name="Kohli J."/>
        </authorList>
    </citation>
    <scope>FUNCTION</scope>
</reference>
<reference key="11">
    <citation type="journal article" date="2003" name="Nat. Cell Biol.">
        <title>Polo-like kinase Cdc5 promotes chiasmata formation and cosegregation of sister centromeres at meiosis I.</title>
        <authorList>
            <person name="Clyne R.K."/>
            <person name="Katis V.L."/>
            <person name="Jessop L."/>
            <person name="Benjamin K.R."/>
            <person name="Herskowitz I."/>
            <person name="Lichten M."/>
            <person name="Nasmyth K."/>
        </authorList>
    </citation>
    <scope>FUNCTION</scope>
    <scope>PHOSPHORYLATION</scope>
</reference>
<reference key="12">
    <citation type="journal article" date="2003" name="Science">
        <title>Role of Polo-like kinase CDC5 in programming meiosis I chromosome segregation.</title>
        <authorList>
            <person name="Lee B.H."/>
            <person name="Amon A."/>
        </authorList>
    </citation>
    <scope>FUNCTION</scope>
    <scope>PHOSPHORYLATION</scope>
</reference>
<reference key="13">
    <citation type="journal article" date="2004" name="Curr. Biol.">
        <title>Maintenance of cohesin at centromeres after meiosis I in budding yeast requires a kinetochore-associated protein related to MEI-S332.</title>
        <authorList>
            <person name="Katis V.L."/>
            <person name="Galova M."/>
            <person name="Rabitsch K.P."/>
            <person name="Gregan J."/>
            <person name="Nasmyth K."/>
        </authorList>
    </citation>
    <scope>FUNCTION</scope>
</reference>
<reference key="14">
    <citation type="journal article" date="2004" name="Curr. Biol.">
        <title>Mnd1 is required for meiotic interhomolog repair.</title>
        <authorList>
            <person name="Zierhut C."/>
            <person name="Berlinger M."/>
            <person name="Rupp C."/>
            <person name="Shinohara A."/>
            <person name="Klein F."/>
        </authorList>
    </citation>
    <scope>FUNCTION</scope>
</reference>
<reference key="15">
    <citation type="journal article" date="2004" name="Curr. Biol.">
        <title>Spo13 maintains centromeric cohesion and kinetochore coorientation during meiosis I.</title>
        <authorList>
            <person name="Lee B.H."/>
            <person name="Kiburz B.M."/>
            <person name="Amon A."/>
        </authorList>
    </citation>
    <scope>FUNCTION</scope>
</reference>
<reference key="16">
    <citation type="journal article" date="2005" name="Cell">
        <title>Chromosome morphogenesis: condensin-dependent cohesin removal during meiosis.</title>
        <authorList>
            <person name="Yu H.-G."/>
            <person name="Koshland D."/>
        </authorList>
    </citation>
    <scope>SUBCELLULAR LOCATION</scope>
</reference>
<reference key="17">
    <citation type="journal article" date="2005" name="J. Cell Biol.">
        <title>Meiotic telomere clustering requires actin for its formation and cohesin for its resolution.</title>
        <authorList>
            <person name="Trelles-Sticken E."/>
            <person name="Adelfalk C."/>
            <person name="Loidl J."/>
            <person name="Scherthan H."/>
        </authorList>
    </citation>
    <scope>FUNCTION</scope>
</reference>
<reference key="18">
    <citation type="journal article" date="2005" name="Mol. Microbiol.">
        <title>Budding yeast PDS5 plays an important role in meiosis and is required for sister chromatid cohesion.</title>
        <authorList>
            <person name="Zhang Z."/>
            <person name="Ren Q."/>
            <person name="Yang H."/>
            <person name="Conrad M.N."/>
            <person name="Guacci V."/>
            <person name="Kateneva A."/>
            <person name="Dresser M.E."/>
        </authorList>
    </citation>
    <scope>FUNCTION</scope>
    <scope>SUBCELLULAR LOCATION</scope>
</reference>
<reference key="19">
    <citation type="journal article" date="2019" name="Genes Cells">
        <title>Meiosis-specific cohesin component, Rec8, promotes the localization of Mps3 SUN domain protein on the nuclear envelope.</title>
        <authorList>
            <person name="Bommi J.R."/>
            <person name="Rao H.B.D.P."/>
            <person name="Challa K."/>
            <person name="Higashide M."/>
            <person name="Shinmyozu K."/>
            <person name="Nakayama J.I."/>
            <person name="Shinohara M."/>
            <person name="Shinohara A."/>
        </authorList>
    </citation>
    <scope>FUNCTION</scope>
    <scope>INTERACTION WITH MPS3</scope>
    <scope>SUBCELLULAR LOCATION</scope>
</reference>
<organism>
    <name type="scientific">Saccharomyces cerevisiae (strain ATCC 204508 / S288c)</name>
    <name type="common">Baker's yeast</name>
    <dbReference type="NCBI Taxonomy" id="559292"/>
    <lineage>
        <taxon>Eukaryota</taxon>
        <taxon>Fungi</taxon>
        <taxon>Dikarya</taxon>
        <taxon>Ascomycota</taxon>
        <taxon>Saccharomycotina</taxon>
        <taxon>Saccharomycetes</taxon>
        <taxon>Saccharomycetales</taxon>
        <taxon>Saccharomycetaceae</taxon>
        <taxon>Saccharomyces</taxon>
    </lineage>
</organism>
<dbReference type="EMBL" id="U31900">
    <property type="protein sequence ID" value="AAA97586.1"/>
    <property type="molecule type" value="Genomic_DNA"/>
</dbReference>
<dbReference type="EMBL" id="Z48951">
    <property type="protein sequence ID" value="CAA88785.1"/>
    <property type="molecule type" value="Genomic_DNA"/>
</dbReference>
<dbReference type="EMBL" id="Z71255">
    <property type="protein sequence ID" value="CAA95047.1"/>
    <property type="molecule type" value="Genomic_DNA"/>
</dbReference>
<dbReference type="EMBL" id="BK006949">
    <property type="protein sequence ID" value="DAA11434.1"/>
    <property type="molecule type" value="Genomic_DNA"/>
</dbReference>
<dbReference type="PIR" id="S52820">
    <property type="entry name" value="S52820"/>
</dbReference>
<dbReference type="RefSeq" id="NP_015332.1">
    <property type="nucleotide sequence ID" value="NM_001184104.1"/>
</dbReference>
<dbReference type="BioGRID" id="36184">
    <property type="interactions" value="104"/>
</dbReference>
<dbReference type="ComplexPortal" id="CPX-1408">
    <property type="entry name" value="Nuclear meiotic cohesin complex"/>
</dbReference>
<dbReference type="ELM" id="Q12188"/>
<dbReference type="FunCoup" id="Q12188">
    <property type="interactions" value="201"/>
</dbReference>
<dbReference type="IntAct" id="Q12188">
    <property type="interactions" value="1"/>
</dbReference>
<dbReference type="MINT" id="Q12188"/>
<dbReference type="STRING" id="4932.YPR007C"/>
<dbReference type="iPTMnet" id="Q12188"/>
<dbReference type="PaxDb" id="4932-YPR007C"/>
<dbReference type="PeptideAtlas" id="Q12188"/>
<dbReference type="EnsemblFungi" id="YPR007C_mRNA">
    <property type="protein sequence ID" value="YPR007C"/>
    <property type="gene ID" value="YPR007C"/>
</dbReference>
<dbReference type="GeneID" id="856115"/>
<dbReference type="KEGG" id="sce:YPR007C"/>
<dbReference type="AGR" id="SGD:S000006211"/>
<dbReference type="SGD" id="S000006211">
    <property type="gene designation" value="REC8"/>
</dbReference>
<dbReference type="VEuPathDB" id="FungiDB:YPR007C"/>
<dbReference type="eggNOG" id="ENOG502QWJ1">
    <property type="taxonomic scope" value="Eukaryota"/>
</dbReference>
<dbReference type="HOGENOM" id="CLU_399675_0_0_1"/>
<dbReference type="InParanoid" id="Q12188"/>
<dbReference type="OMA" id="YGVTICY"/>
<dbReference type="OrthoDB" id="5427633at2759"/>
<dbReference type="BioCyc" id="YEAST:G3O-34169-MONOMER"/>
<dbReference type="Reactome" id="R-SCE-2468052">
    <property type="pathway name" value="Establishment of Sister Chromatid Cohesion"/>
</dbReference>
<dbReference type="Reactome" id="R-SCE-2500257">
    <property type="pathway name" value="Resolution of Sister Chromatid Cohesion"/>
</dbReference>
<dbReference type="Reactome" id="R-SCE-3108214">
    <property type="pathway name" value="SUMOylation of DNA damage response and repair proteins"/>
</dbReference>
<dbReference type="BioGRID-ORCS" id="856115">
    <property type="hits" value="0 hits in 10 CRISPR screens"/>
</dbReference>
<dbReference type="PRO" id="PR:Q12188"/>
<dbReference type="Proteomes" id="UP000002311">
    <property type="component" value="Chromosome XVI"/>
</dbReference>
<dbReference type="RNAct" id="Q12188">
    <property type="molecule type" value="protein"/>
</dbReference>
<dbReference type="GO" id="GO:0000775">
    <property type="term" value="C:chromosome, centromeric region"/>
    <property type="evidence" value="ECO:0000314"/>
    <property type="project" value="SGD"/>
</dbReference>
<dbReference type="GO" id="GO:0008278">
    <property type="term" value="C:cohesin complex"/>
    <property type="evidence" value="ECO:0000318"/>
    <property type="project" value="GO_Central"/>
</dbReference>
<dbReference type="GO" id="GO:0000779">
    <property type="term" value="C:condensed chromosome, centromeric region"/>
    <property type="evidence" value="ECO:0000314"/>
    <property type="project" value="SGD"/>
</dbReference>
<dbReference type="GO" id="GO:0000794">
    <property type="term" value="C:condensed nuclear chromosome"/>
    <property type="evidence" value="ECO:0000314"/>
    <property type="project" value="SGD"/>
</dbReference>
<dbReference type="GO" id="GO:0030893">
    <property type="term" value="C:meiotic cohesin complex"/>
    <property type="evidence" value="ECO:0000303"/>
    <property type="project" value="ComplexPortal"/>
</dbReference>
<dbReference type="GO" id="GO:0005634">
    <property type="term" value="C:nucleus"/>
    <property type="evidence" value="ECO:0000303"/>
    <property type="project" value="ComplexPortal"/>
</dbReference>
<dbReference type="GO" id="GO:0003682">
    <property type="term" value="F:chromatin binding"/>
    <property type="evidence" value="ECO:0000314"/>
    <property type="project" value="SGD"/>
</dbReference>
<dbReference type="GO" id="GO:0006302">
    <property type="term" value="P:double-strand break repair"/>
    <property type="evidence" value="ECO:0000318"/>
    <property type="project" value="GO_Central"/>
</dbReference>
<dbReference type="GO" id="GO:0034089">
    <property type="term" value="P:establishment of meiotic sister chromatid cohesion"/>
    <property type="evidence" value="ECO:0000303"/>
    <property type="project" value="ComplexPortal"/>
</dbReference>
<dbReference type="GO" id="GO:0042138">
    <property type="term" value="P:meiotic DNA double-strand break formation"/>
    <property type="evidence" value="ECO:0000315"/>
    <property type="project" value="SGD"/>
</dbReference>
<dbReference type="GO" id="GO:0051177">
    <property type="term" value="P:meiotic sister chromatid cohesion"/>
    <property type="evidence" value="ECO:0000315"/>
    <property type="project" value="SGD"/>
</dbReference>
<dbReference type="GO" id="GO:0071459">
    <property type="term" value="P:protein localization to chromosome, centromeric region"/>
    <property type="evidence" value="ECO:0000316"/>
    <property type="project" value="SGD"/>
</dbReference>
<dbReference type="GO" id="GO:0007131">
    <property type="term" value="P:reciprocal meiotic recombination"/>
    <property type="evidence" value="ECO:0000315"/>
    <property type="project" value="SGD"/>
</dbReference>
<dbReference type="GO" id="GO:0007062">
    <property type="term" value="P:sister chromatid cohesion"/>
    <property type="evidence" value="ECO:0000318"/>
    <property type="project" value="GO_Central"/>
</dbReference>
<dbReference type="GO" id="GO:0007130">
    <property type="term" value="P:synaptonemal complex assembly"/>
    <property type="evidence" value="ECO:0000315"/>
    <property type="project" value="SGD"/>
</dbReference>
<dbReference type="CDD" id="cd21790">
    <property type="entry name" value="Rad21_Rec8_M_ScRec8p-like"/>
    <property type="match status" value="1"/>
</dbReference>
<dbReference type="InterPro" id="IPR039781">
    <property type="entry name" value="Rad21/Rec8-like"/>
</dbReference>
<dbReference type="InterPro" id="IPR006910">
    <property type="entry name" value="Rad21_Rec8_N"/>
</dbReference>
<dbReference type="PANTHER" id="PTHR12585:SF51">
    <property type="entry name" value="MEIOTIC RECOMBINATION PROTEIN REC8"/>
    <property type="match status" value="1"/>
</dbReference>
<dbReference type="PANTHER" id="PTHR12585">
    <property type="entry name" value="SCC1 / RAD21 FAMILY MEMBER"/>
    <property type="match status" value="1"/>
</dbReference>
<dbReference type="Pfam" id="PF04825">
    <property type="entry name" value="Rad21_Rec8_N"/>
    <property type="match status" value="1"/>
</dbReference>